<sequence>MLLCIVLFLIFHILINQAGIVHVLYNASFVASSSRFILFCEELFKATPQYWQWGNSIVQNGDASIASTLYLTMRTFIKHWKYTLLIMINQSISYSCYSTNEASHLLFTNLPKVAPYTLGPLNFECCLLSSHHIRHIVLMFYGANIDHGLTKYELYTVCRPSSDEKLCNKILNSPRLHTHNRYLYLTEVRIVGAFYLIKQVGARMVGLLVHLAFMVLQNLPKLIWPLDLVHVRQKGTCTAHIAYHPLAQKHFPPYFTHFYLNVTIYAVVKNILDNISSSFTLQSNRVRPRPDVAGFDFFHRFDAFEQSLTYGGDTGITSSNEKVALCFEATYTDIFFTVEIIDSTSVDSGAIMLPILVDAYTAVARNFCSVSMVISPLVTLVVYDIYTCSFIGLCTQRRTINCTRILDAISSVGNSHTFLPRYKSPRELTTRQPSGSSVILLIFLLLGFEFFLFSGLVVVEPVNDVGDLVVNDLLVAFIDLALELFVVEGVAEVVGVVFKTVLGFNADVVGFIFRLVLFSFLHHAFNIILGEATLVVGNGNLVFFTSRLFDGRHVQDTVGINVEGDINLWNTTRHWRNTIEGELPEQVVVTGHRTLTFKHLNQHTRLVVSVGGESLRLLGWHSSVTLDEGSHDTTSSFQTKRERSDIKKQQVLELFRRVVTAQNGSLDCGTESNSFIRVDRLAWFLAVEEVRKQLLDLWDTGGTTDKDDFMDLALGELRVTEDLFNRFHSLAEVVTAHVFETGTGDGGVEINTIEERVDFNVSLGRRRKSTLGTFTSGTKTAKGTLVLGHILAVLALEFSGKVVDEAVIEIFTTQVGITSSSLDFEDTFFNGQKRHIEGTTTKIENENIAFTTLLVKTVGNGGTSRFVNDTKDVKTSNGTSILGSLTLRVVEISWDGNDSVVNSSTNEGFSNFLHLDQNHRGNFFRLESLSFTLEFDGDLWLVTSTRGNLEWPVLNIGLSSWVVEFTTDQTLSIEHSVGRVHGNLVLSGITNKTFAVSESNVRWGGTVTLIVGNNFNTIVLPDTDTRISRTEIDTDGSSLDTRHACSKFKNEVDSPPHLTSAFI</sequence>
<comment type="catalytic activity">
    <reaction>
        <text>L-glutamate + NAD(+) + H2O = 2-oxoglutarate + NH4(+) + NADH + H(+)</text>
        <dbReference type="Rhea" id="RHEA:15133"/>
        <dbReference type="ChEBI" id="CHEBI:15377"/>
        <dbReference type="ChEBI" id="CHEBI:15378"/>
        <dbReference type="ChEBI" id="CHEBI:16810"/>
        <dbReference type="ChEBI" id="CHEBI:28938"/>
        <dbReference type="ChEBI" id="CHEBI:29985"/>
        <dbReference type="ChEBI" id="CHEBI:57540"/>
        <dbReference type="ChEBI" id="CHEBI:57945"/>
        <dbReference type="EC" id="1.4.1.2"/>
    </reaction>
</comment>
<comment type="activity regulation">
    <text>Allosterically activated by NADP(+).</text>
</comment>
<comment type="subunit">
    <text>Homotetramer.</text>
</comment>
<comment type="similarity">
    <text evidence="1">Belongs to the Glu/Leu/Phe/Val dehydrogenases family. Highly divergent.</text>
</comment>
<proteinExistence type="inferred from homology"/>
<accession>P41755</accession>
<name>DHE2_ACHKL</name>
<keyword id="KW-0021">Allosteric enzyme</keyword>
<keyword id="KW-0520">NAD</keyword>
<keyword id="KW-0560">Oxidoreductase</keyword>
<protein>
    <recommendedName>
        <fullName>NAD-specific glutamate dehydrogenase</fullName>
        <shortName>NAD-GDH</shortName>
        <ecNumber>1.4.1.2</ecNumber>
    </recommendedName>
</protein>
<feature type="chain" id="PRO_0000182731" description="NAD-specific glutamate dehydrogenase">
    <location>
        <begin position="1"/>
        <end position="1063"/>
    </location>
</feature>
<dbReference type="EC" id="1.4.1.2"/>
<dbReference type="EMBL" id="U02505">
    <property type="protein sequence ID" value="AAA17563.1"/>
    <property type="molecule type" value="Unassigned_DNA"/>
</dbReference>
<dbReference type="PIR" id="A53164">
    <property type="entry name" value="A53164"/>
</dbReference>
<dbReference type="GO" id="GO:0004352">
    <property type="term" value="F:glutamate dehydrogenase (NAD+) activity"/>
    <property type="evidence" value="ECO:0007669"/>
    <property type="project" value="UniProtKB-EC"/>
</dbReference>
<dbReference type="InterPro" id="IPR019651">
    <property type="entry name" value="Glutamate_DH_NAD-spec"/>
</dbReference>
<dbReference type="Pfam" id="PF10712">
    <property type="entry name" value="NAD-GH"/>
    <property type="match status" value="1"/>
</dbReference>
<evidence type="ECO:0000305" key="1"/>
<organism>
    <name type="scientific">Achlya klebsiana</name>
    <dbReference type="NCBI Taxonomy" id="4767"/>
    <lineage>
        <taxon>Eukaryota</taxon>
        <taxon>Sar</taxon>
        <taxon>Stramenopiles</taxon>
        <taxon>Oomycota</taxon>
        <taxon>Saprolegniales</taxon>
        <taxon>Saprolegniaceae</taxon>
        <taxon>Achlya</taxon>
    </lineage>
</organism>
<reference key="1">
    <citation type="journal article" date="1994" name="J. Biol. Chem.">
        <title>Molecular characterization of an NAD-specific glutamate dehydrogenase gene inducible by L-glutamine. Antisense gene pair arrangement with L-glutamine-inducible heat shock 70-like protein gene.</title>
        <authorList>
            <person name="Lejohn H.B."/>
            <person name="Cameron L.E."/>
            <person name="Yang B."/>
            <person name="Rennie S.L."/>
        </authorList>
    </citation>
    <scope>NUCLEOTIDE SEQUENCE</scope>
</reference>